<gene>
    <name evidence="1" type="primary">rsmH</name>
    <name type="synonym">mraW</name>
    <name type="ordered locus">PP_1329</name>
</gene>
<sequence>MTIDSGFNHITVLLDEAVEALALRADGCYLDGTFGRGGHSRLILSKLGPQGRLLGFDKDPQAIATGQALAAEDGRFVIVQRSFAELGAEVAARGLHGKVSGVLLDLGVSSPQLDDPERGFSFLNDGPLDMRMNPDQGVSAAEFIATAPVEEIARVFKEYGEERFAGRMARAVVERREKQPFTRTADLAEVLKVANPAWEKGKNPATRAFQGLRIHVNNELGDLEAGLEAALDALEVGGRLAVISFHSLEDRIVKLFMRKLVKGEADNLPRNLPVQHKVFEPKIKLIGKAQFASEAELKANPRSRSAVMRVAEKLR</sequence>
<evidence type="ECO:0000255" key="1">
    <source>
        <dbReference type="HAMAP-Rule" id="MF_01007"/>
    </source>
</evidence>
<organism>
    <name type="scientific">Pseudomonas putida (strain ATCC 47054 / DSM 6125 / CFBP 8728 / NCIMB 11950 / KT2440)</name>
    <dbReference type="NCBI Taxonomy" id="160488"/>
    <lineage>
        <taxon>Bacteria</taxon>
        <taxon>Pseudomonadati</taxon>
        <taxon>Pseudomonadota</taxon>
        <taxon>Gammaproteobacteria</taxon>
        <taxon>Pseudomonadales</taxon>
        <taxon>Pseudomonadaceae</taxon>
        <taxon>Pseudomonas</taxon>
    </lineage>
</organism>
<comment type="function">
    <text evidence="1">Specifically methylates the N4 position of cytidine in position 1402 (C1402) of 16S rRNA.</text>
</comment>
<comment type="catalytic activity">
    <reaction evidence="1">
        <text>cytidine(1402) in 16S rRNA + S-adenosyl-L-methionine = N(4)-methylcytidine(1402) in 16S rRNA + S-adenosyl-L-homocysteine + H(+)</text>
        <dbReference type="Rhea" id="RHEA:42928"/>
        <dbReference type="Rhea" id="RHEA-COMP:10286"/>
        <dbReference type="Rhea" id="RHEA-COMP:10287"/>
        <dbReference type="ChEBI" id="CHEBI:15378"/>
        <dbReference type="ChEBI" id="CHEBI:57856"/>
        <dbReference type="ChEBI" id="CHEBI:59789"/>
        <dbReference type="ChEBI" id="CHEBI:74506"/>
        <dbReference type="ChEBI" id="CHEBI:82748"/>
        <dbReference type="EC" id="2.1.1.199"/>
    </reaction>
</comment>
<comment type="subcellular location">
    <subcellularLocation>
        <location evidence="1">Cytoplasm</location>
    </subcellularLocation>
</comment>
<comment type="similarity">
    <text evidence="1">Belongs to the methyltransferase superfamily. RsmH family.</text>
</comment>
<feature type="chain" id="PRO_0000108686" description="Ribosomal RNA small subunit methyltransferase H">
    <location>
        <begin position="1"/>
        <end position="315"/>
    </location>
</feature>
<feature type="binding site" evidence="1">
    <location>
        <begin position="37"/>
        <end position="39"/>
    </location>
    <ligand>
        <name>S-adenosyl-L-methionine</name>
        <dbReference type="ChEBI" id="CHEBI:59789"/>
    </ligand>
</feature>
<feature type="binding site" evidence="1">
    <location>
        <position position="57"/>
    </location>
    <ligand>
        <name>S-adenosyl-L-methionine</name>
        <dbReference type="ChEBI" id="CHEBI:59789"/>
    </ligand>
</feature>
<feature type="binding site" evidence="1">
    <location>
        <position position="83"/>
    </location>
    <ligand>
        <name>S-adenosyl-L-methionine</name>
        <dbReference type="ChEBI" id="CHEBI:59789"/>
    </ligand>
</feature>
<feature type="binding site" evidence="1">
    <location>
        <position position="105"/>
    </location>
    <ligand>
        <name>S-adenosyl-L-methionine</name>
        <dbReference type="ChEBI" id="CHEBI:59789"/>
    </ligand>
</feature>
<feature type="binding site" evidence="1">
    <location>
        <position position="112"/>
    </location>
    <ligand>
        <name>S-adenosyl-L-methionine</name>
        <dbReference type="ChEBI" id="CHEBI:59789"/>
    </ligand>
</feature>
<accession>Q88N84</accession>
<keyword id="KW-0963">Cytoplasm</keyword>
<keyword id="KW-0489">Methyltransferase</keyword>
<keyword id="KW-1185">Reference proteome</keyword>
<keyword id="KW-0698">rRNA processing</keyword>
<keyword id="KW-0949">S-adenosyl-L-methionine</keyword>
<keyword id="KW-0808">Transferase</keyword>
<dbReference type="EC" id="2.1.1.199" evidence="1"/>
<dbReference type="EMBL" id="AE015451">
    <property type="protein sequence ID" value="AAN66952.1"/>
    <property type="molecule type" value="Genomic_DNA"/>
</dbReference>
<dbReference type="RefSeq" id="NP_743488.1">
    <property type="nucleotide sequence ID" value="NC_002947.4"/>
</dbReference>
<dbReference type="RefSeq" id="WP_010952447.1">
    <property type="nucleotide sequence ID" value="NZ_CP169744.1"/>
</dbReference>
<dbReference type="SMR" id="Q88N84"/>
<dbReference type="STRING" id="160488.PP_1329"/>
<dbReference type="PaxDb" id="160488-PP_1329"/>
<dbReference type="KEGG" id="ppu:PP_1329"/>
<dbReference type="PATRIC" id="fig|160488.4.peg.1408"/>
<dbReference type="eggNOG" id="COG0275">
    <property type="taxonomic scope" value="Bacteria"/>
</dbReference>
<dbReference type="HOGENOM" id="CLU_038422_2_0_6"/>
<dbReference type="OrthoDB" id="9806637at2"/>
<dbReference type="PhylomeDB" id="Q88N84"/>
<dbReference type="BioCyc" id="PPUT160488:G1G01-1416-MONOMER"/>
<dbReference type="Proteomes" id="UP000000556">
    <property type="component" value="Chromosome"/>
</dbReference>
<dbReference type="GO" id="GO:0005737">
    <property type="term" value="C:cytoplasm"/>
    <property type="evidence" value="ECO:0007669"/>
    <property type="project" value="UniProtKB-SubCell"/>
</dbReference>
<dbReference type="GO" id="GO:0071424">
    <property type="term" value="F:rRNA (cytosine-N4-)-methyltransferase activity"/>
    <property type="evidence" value="ECO:0007669"/>
    <property type="project" value="UniProtKB-UniRule"/>
</dbReference>
<dbReference type="GO" id="GO:0070475">
    <property type="term" value="P:rRNA base methylation"/>
    <property type="evidence" value="ECO:0007669"/>
    <property type="project" value="UniProtKB-UniRule"/>
</dbReference>
<dbReference type="FunFam" id="1.10.150.170:FF:000003">
    <property type="entry name" value="Ribosomal RNA small subunit methyltransferase H"/>
    <property type="match status" value="1"/>
</dbReference>
<dbReference type="Gene3D" id="1.10.150.170">
    <property type="entry name" value="Putative methyltransferase TM0872, insert domain"/>
    <property type="match status" value="1"/>
</dbReference>
<dbReference type="Gene3D" id="3.40.50.150">
    <property type="entry name" value="Vaccinia Virus protein VP39"/>
    <property type="match status" value="1"/>
</dbReference>
<dbReference type="HAMAP" id="MF_01007">
    <property type="entry name" value="16SrRNA_methyltr_H"/>
    <property type="match status" value="1"/>
</dbReference>
<dbReference type="InterPro" id="IPR002903">
    <property type="entry name" value="RsmH"/>
</dbReference>
<dbReference type="InterPro" id="IPR023397">
    <property type="entry name" value="SAM-dep_MeTrfase_MraW_recog"/>
</dbReference>
<dbReference type="InterPro" id="IPR029063">
    <property type="entry name" value="SAM-dependent_MTases_sf"/>
</dbReference>
<dbReference type="NCBIfam" id="TIGR00006">
    <property type="entry name" value="16S rRNA (cytosine(1402)-N(4))-methyltransferase RsmH"/>
    <property type="match status" value="1"/>
</dbReference>
<dbReference type="PANTHER" id="PTHR11265:SF0">
    <property type="entry name" value="12S RRNA N4-METHYLCYTIDINE METHYLTRANSFERASE"/>
    <property type="match status" value="1"/>
</dbReference>
<dbReference type="PANTHER" id="PTHR11265">
    <property type="entry name" value="S-ADENOSYL-METHYLTRANSFERASE MRAW"/>
    <property type="match status" value="1"/>
</dbReference>
<dbReference type="Pfam" id="PF01795">
    <property type="entry name" value="Methyltransf_5"/>
    <property type="match status" value="1"/>
</dbReference>
<dbReference type="PIRSF" id="PIRSF004486">
    <property type="entry name" value="MraW"/>
    <property type="match status" value="1"/>
</dbReference>
<dbReference type="SUPFAM" id="SSF81799">
    <property type="entry name" value="Putative methyltransferase TM0872, insert domain"/>
    <property type="match status" value="1"/>
</dbReference>
<dbReference type="SUPFAM" id="SSF53335">
    <property type="entry name" value="S-adenosyl-L-methionine-dependent methyltransferases"/>
    <property type="match status" value="1"/>
</dbReference>
<proteinExistence type="inferred from homology"/>
<protein>
    <recommendedName>
        <fullName evidence="1">Ribosomal RNA small subunit methyltransferase H</fullName>
        <ecNumber evidence="1">2.1.1.199</ecNumber>
    </recommendedName>
    <alternativeName>
        <fullName evidence="1">16S rRNA m(4)C1402 methyltransferase</fullName>
    </alternativeName>
    <alternativeName>
        <fullName evidence="1">rRNA (cytosine-N(4)-)-methyltransferase RsmH</fullName>
    </alternativeName>
</protein>
<reference key="1">
    <citation type="journal article" date="2002" name="Environ. Microbiol.">
        <title>Complete genome sequence and comparative analysis of the metabolically versatile Pseudomonas putida KT2440.</title>
        <authorList>
            <person name="Nelson K.E."/>
            <person name="Weinel C."/>
            <person name="Paulsen I.T."/>
            <person name="Dodson R.J."/>
            <person name="Hilbert H."/>
            <person name="Martins dos Santos V.A.P."/>
            <person name="Fouts D.E."/>
            <person name="Gill S.R."/>
            <person name="Pop M."/>
            <person name="Holmes M."/>
            <person name="Brinkac L.M."/>
            <person name="Beanan M.J."/>
            <person name="DeBoy R.T."/>
            <person name="Daugherty S.C."/>
            <person name="Kolonay J.F."/>
            <person name="Madupu R."/>
            <person name="Nelson W.C."/>
            <person name="White O."/>
            <person name="Peterson J.D."/>
            <person name="Khouri H.M."/>
            <person name="Hance I."/>
            <person name="Chris Lee P."/>
            <person name="Holtzapple E.K."/>
            <person name="Scanlan D."/>
            <person name="Tran K."/>
            <person name="Moazzez A."/>
            <person name="Utterback T.R."/>
            <person name="Rizzo M."/>
            <person name="Lee K."/>
            <person name="Kosack D."/>
            <person name="Moestl D."/>
            <person name="Wedler H."/>
            <person name="Lauber J."/>
            <person name="Stjepandic D."/>
            <person name="Hoheisel J."/>
            <person name="Straetz M."/>
            <person name="Heim S."/>
            <person name="Kiewitz C."/>
            <person name="Eisen J.A."/>
            <person name="Timmis K.N."/>
            <person name="Duesterhoeft A."/>
            <person name="Tuemmler B."/>
            <person name="Fraser C.M."/>
        </authorList>
    </citation>
    <scope>NUCLEOTIDE SEQUENCE [LARGE SCALE GENOMIC DNA]</scope>
    <source>
        <strain>ATCC 47054 / DSM 6125 / CFBP 8728 / NCIMB 11950 / KT2440</strain>
    </source>
</reference>
<name>RSMH_PSEPK</name>